<reference key="1">
    <citation type="submission" date="2007-02" db="EMBL/GenBank/DDBJ databases">
        <title>Complete sequence of chromosome of Yersinia pestis Pestoides F.</title>
        <authorList>
            <consortium name="US DOE Joint Genome Institute"/>
            <person name="Copeland A."/>
            <person name="Lucas S."/>
            <person name="Lapidus A."/>
            <person name="Barry K."/>
            <person name="Detter J.C."/>
            <person name="Glavina del Rio T."/>
            <person name="Hammon N."/>
            <person name="Israni S."/>
            <person name="Dalin E."/>
            <person name="Tice H."/>
            <person name="Pitluck S."/>
            <person name="Di Bartolo G."/>
            <person name="Chain P."/>
            <person name="Malfatti S."/>
            <person name="Shin M."/>
            <person name="Vergez L."/>
            <person name="Schmutz J."/>
            <person name="Larimer F."/>
            <person name="Land M."/>
            <person name="Hauser L."/>
            <person name="Worsham P."/>
            <person name="Chu M."/>
            <person name="Bearden S."/>
            <person name="Garcia E."/>
            <person name="Richardson P."/>
        </authorList>
    </citation>
    <scope>NUCLEOTIDE SEQUENCE [LARGE SCALE GENOMIC DNA]</scope>
    <source>
        <strain>Pestoides F</strain>
    </source>
</reference>
<accession>A4TPA3</accession>
<gene>
    <name evidence="1" type="primary">hemH</name>
    <name type="ordered locus">YPDSF_2753</name>
</gene>
<dbReference type="EC" id="4.98.1.1" evidence="1"/>
<dbReference type="EMBL" id="CP000668">
    <property type="protein sequence ID" value="ABP41115.1"/>
    <property type="molecule type" value="Genomic_DNA"/>
</dbReference>
<dbReference type="RefSeq" id="WP_002208599.1">
    <property type="nucleotide sequence ID" value="NZ_CP009715.1"/>
</dbReference>
<dbReference type="SMR" id="A4TPA3"/>
<dbReference type="GeneID" id="57975594"/>
<dbReference type="KEGG" id="ypp:YPDSF_2753"/>
<dbReference type="UniPathway" id="UPA00252">
    <property type="reaction ID" value="UER00325"/>
</dbReference>
<dbReference type="GO" id="GO:0005737">
    <property type="term" value="C:cytoplasm"/>
    <property type="evidence" value="ECO:0007669"/>
    <property type="project" value="UniProtKB-SubCell"/>
</dbReference>
<dbReference type="GO" id="GO:0004325">
    <property type="term" value="F:ferrochelatase activity"/>
    <property type="evidence" value="ECO:0007669"/>
    <property type="project" value="UniProtKB-UniRule"/>
</dbReference>
<dbReference type="GO" id="GO:0046872">
    <property type="term" value="F:metal ion binding"/>
    <property type="evidence" value="ECO:0007669"/>
    <property type="project" value="UniProtKB-KW"/>
</dbReference>
<dbReference type="GO" id="GO:0006783">
    <property type="term" value="P:heme biosynthetic process"/>
    <property type="evidence" value="ECO:0007669"/>
    <property type="project" value="UniProtKB-UniRule"/>
</dbReference>
<dbReference type="CDD" id="cd00419">
    <property type="entry name" value="Ferrochelatase_C"/>
    <property type="match status" value="1"/>
</dbReference>
<dbReference type="CDD" id="cd03411">
    <property type="entry name" value="Ferrochelatase_N"/>
    <property type="match status" value="1"/>
</dbReference>
<dbReference type="FunFam" id="3.40.50.1400:FF:000004">
    <property type="entry name" value="Ferrochelatase"/>
    <property type="match status" value="1"/>
</dbReference>
<dbReference type="Gene3D" id="3.40.50.1400">
    <property type="match status" value="2"/>
</dbReference>
<dbReference type="HAMAP" id="MF_00323">
    <property type="entry name" value="Ferrochelatase"/>
    <property type="match status" value="1"/>
</dbReference>
<dbReference type="InterPro" id="IPR001015">
    <property type="entry name" value="Ferrochelatase"/>
</dbReference>
<dbReference type="InterPro" id="IPR019772">
    <property type="entry name" value="Ferrochelatase_AS"/>
</dbReference>
<dbReference type="InterPro" id="IPR033644">
    <property type="entry name" value="Ferrochelatase_C"/>
</dbReference>
<dbReference type="InterPro" id="IPR033659">
    <property type="entry name" value="Ferrochelatase_N"/>
</dbReference>
<dbReference type="NCBIfam" id="TIGR00109">
    <property type="entry name" value="hemH"/>
    <property type="match status" value="1"/>
</dbReference>
<dbReference type="PANTHER" id="PTHR11108">
    <property type="entry name" value="FERROCHELATASE"/>
    <property type="match status" value="1"/>
</dbReference>
<dbReference type="PANTHER" id="PTHR11108:SF1">
    <property type="entry name" value="FERROCHELATASE, MITOCHONDRIAL"/>
    <property type="match status" value="1"/>
</dbReference>
<dbReference type="Pfam" id="PF00762">
    <property type="entry name" value="Ferrochelatase"/>
    <property type="match status" value="1"/>
</dbReference>
<dbReference type="SUPFAM" id="SSF53800">
    <property type="entry name" value="Chelatase"/>
    <property type="match status" value="1"/>
</dbReference>
<dbReference type="PROSITE" id="PS00534">
    <property type="entry name" value="FERROCHELATASE"/>
    <property type="match status" value="1"/>
</dbReference>
<organism>
    <name type="scientific">Yersinia pestis (strain Pestoides F)</name>
    <dbReference type="NCBI Taxonomy" id="386656"/>
    <lineage>
        <taxon>Bacteria</taxon>
        <taxon>Pseudomonadati</taxon>
        <taxon>Pseudomonadota</taxon>
        <taxon>Gammaproteobacteria</taxon>
        <taxon>Enterobacterales</taxon>
        <taxon>Yersiniaceae</taxon>
        <taxon>Yersinia</taxon>
    </lineage>
</organism>
<evidence type="ECO:0000255" key="1">
    <source>
        <dbReference type="HAMAP-Rule" id="MF_00323"/>
    </source>
</evidence>
<keyword id="KW-0963">Cytoplasm</keyword>
<keyword id="KW-0350">Heme biosynthesis</keyword>
<keyword id="KW-0408">Iron</keyword>
<keyword id="KW-0456">Lyase</keyword>
<keyword id="KW-0479">Metal-binding</keyword>
<keyword id="KW-0627">Porphyrin biosynthesis</keyword>
<name>HEMH_YERPP</name>
<sequence>MMQSKPGVLMVNLGTPDAPTSKAIKRYLAEFLSDRRVVDTSPLLWWPLLHGVILPLRSPRVAKLYQSVWMEEGSPLLVYSRRQQKALAARMPDIPVELGMSYGSPNLPEAIEKLLAQGVTNLVILPLYPQYSCSTSAAVWDAVARVLKGYRRLPSISFIRDYAEHPAYISALKQSVERSFAEHGQPDRLVMSFHGIPKRYAQLGDDYPIRCEDTSRALRAALPLPAEKIIMTYQSRFGREPWLTPYTDETLKSLPSQGVKHIQLICPGFSADCLETLEEIKEQNREFFLHAGGEKFEYIPALNDDEGHIALLEQLIRHNI</sequence>
<comment type="function">
    <text evidence="1">Catalyzes the ferrous insertion into protoporphyrin IX.</text>
</comment>
<comment type="catalytic activity">
    <reaction evidence="1">
        <text>heme b + 2 H(+) = protoporphyrin IX + Fe(2+)</text>
        <dbReference type="Rhea" id="RHEA:22584"/>
        <dbReference type="ChEBI" id="CHEBI:15378"/>
        <dbReference type="ChEBI" id="CHEBI:29033"/>
        <dbReference type="ChEBI" id="CHEBI:57306"/>
        <dbReference type="ChEBI" id="CHEBI:60344"/>
        <dbReference type="EC" id="4.98.1.1"/>
    </reaction>
</comment>
<comment type="pathway">
    <text evidence="1">Porphyrin-containing compound metabolism; protoheme biosynthesis; protoheme from protoporphyrin-IX: step 1/1.</text>
</comment>
<comment type="subcellular location">
    <subcellularLocation>
        <location evidence="1">Cytoplasm</location>
    </subcellularLocation>
</comment>
<comment type="similarity">
    <text evidence="1">Belongs to the ferrochelatase family.</text>
</comment>
<proteinExistence type="inferred from homology"/>
<feature type="chain" id="PRO_1000019388" description="Ferrochelatase">
    <location>
        <begin position="1"/>
        <end position="320"/>
    </location>
</feature>
<feature type="binding site" evidence="1">
    <location>
        <position position="194"/>
    </location>
    <ligand>
        <name>Fe cation</name>
        <dbReference type="ChEBI" id="CHEBI:24875"/>
    </ligand>
</feature>
<feature type="binding site" evidence="1">
    <location>
        <position position="275"/>
    </location>
    <ligand>
        <name>Fe cation</name>
        <dbReference type="ChEBI" id="CHEBI:24875"/>
    </ligand>
</feature>
<protein>
    <recommendedName>
        <fullName evidence="1">Ferrochelatase</fullName>
        <ecNumber evidence="1">4.98.1.1</ecNumber>
    </recommendedName>
    <alternativeName>
        <fullName evidence="1">Heme synthase</fullName>
    </alternativeName>
    <alternativeName>
        <fullName evidence="1">Protoheme ferro-lyase</fullName>
    </alternativeName>
</protein>